<comment type="function">
    <text evidence="2">Catalyzes the formation of N(7)-methylguanine at position 46 (m7G46) in tRNA.</text>
</comment>
<comment type="catalytic activity">
    <reaction evidence="2">
        <text>guanosine(46) in tRNA + S-adenosyl-L-methionine = N(7)-methylguanosine(46) in tRNA + S-adenosyl-L-homocysteine</text>
        <dbReference type="Rhea" id="RHEA:42708"/>
        <dbReference type="Rhea" id="RHEA-COMP:10188"/>
        <dbReference type="Rhea" id="RHEA-COMP:10189"/>
        <dbReference type="ChEBI" id="CHEBI:57856"/>
        <dbReference type="ChEBI" id="CHEBI:59789"/>
        <dbReference type="ChEBI" id="CHEBI:74269"/>
        <dbReference type="ChEBI" id="CHEBI:74480"/>
        <dbReference type="EC" id="2.1.1.33"/>
    </reaction>
</comment>
<comment type="pathway">
    <text evidence="2">tRNA modification; N(7)-methylguanine-tRNA biosynthesis.</text>
</comment>
<comment type="subunit">
    <text evidence="2">Monomer.</text>
</comment>
<comment type="similarity">
    <text evidence="2">Belongs to the class I-like SAM-binding methyltransferase superfamily. TrmB family.</text>
</comment>
<reference key="1">
    <citation type="journal article" date="2002" name="Proc. Natl. Acad. Sci. U.S.A.">
        <title>Extensive mosaic structure revealed by the complete genome sequence of uropathogenic Escherichia coli.</title>
        <authorList>
            <person name="Welch R.A."/>
            <person name="Burland V."/>
            <person name="Plunkett G. III"/>
            <person name="Redford P."/>
            <person name="Roesch P."/>
            <person name="Rasko D."/>
            <person name="Buckles E.L."/>
            <person name="Liou S.-R."/>
            <person name="Boutin A."/>
            <person name="Hackett J."/>
            <person name="Stroud D."/>
            <person name="Mayhew G.F."/>
            <person name="Rose D.J."/>
            <person name="Zhou S."/>
            <person name="Schwartz D.C."/>
            <person name="Perna N.T."/>
            <person name="Mobley H.L.T."/>
            <person name="Donnenberg M.S."/>
            <person name="Blattner F.R."/>
        </authorList>
    </citation>
    <scope>NUCLEOTIDE SEQUENCE [LARGE SCALE GENOMIC DNA]</scope>
    <source>
        <strain>CFT073 / ATCC 700928 / UPEC</strain>
    </source>
</reference>
<proteinExistence type="inferred from homology"/>
<gene>
    <name evidence="2" type="primary">trmB</name>
    <name type="ordered locus">c3547</name>
</gene>
<evidence type="ECO:0000250" key="1"/>
<evidence type="ECO:0000255" key="2">
    <source>
        <dbReference type="HAMAP-Rule" id="MF_01057"/>
    </source>
</evidence>
<keyword id="KW-0489">Methyltransferase</keyword>
<keyword id="KW-1185">Reference proteome</keyword>
<keyword id="KW-0949">S-adenosyl-L-methionine</keyword>
<keyword id="KW-0808">Transferase</keyword>
<keyword id="KW-0819">tRNA processing</keyword>
<feature type="chain" id="PRO_0000171328" description="tRNA (guanine-N(7)-)-methyltransferase">
    <location>
        <begin position="1"/>
        <end position="239"/>
    </location>
</feature>
<feature type="region of interest" description="Interaction with RNA" evidence="2">
    <location>
        <begin position="150"/>
        <end position="155"/>
    </location>
</feature>
<feature type="active site" evidence="1">
    <location>
        <position position="144"/>
    </location>
</feature>
<feature type="binding site" evidence="2">
    <location>
        <position position="69"/>
    </location>
    <ligand>
        <name>S-adenosyl-L-methionine</name>
        <dbReference type="ChEBI" id="CHEBI:59789"/>
    </ligand>
</feature>
<feature type="binding site" evidence="2">
    <location>
        <position position="94"/>
    </location>
    <ligand>
        <name>S-adenosyl-L-methionine</name>
        <dbReference type="ChEBI" id="CHEBI:59789"/>
    </ligand>
</feature>
<feature type="binding site" evidence="2">
    <location>
        <position position="121"/>
    </location>
    <ligand>
        <name>S-adenosyl-L-methionine</name>
        <dbReference type="ChEBI" id="CHEBI:59789"/>
    </ligand>
</feature>
<feature type="binding site" evidence="2">
    <location>
        <position position="144"/>
    </location>
    <ligand>
        <name>S-adenosyl-L-methionine</name>
        <dbReference type="ChEBI" id="CHEBI:59789"/>
    </ligand>
</feature>
<feature type="binding site" evidence="2">
    <location>
        <position position="148"/>
    </location>
    <ligand>
        <name>substrate</name>
    </ligand>
</feature>
<feature type="binding site" evidence="2">
    <location>
        <position position="180"/>
    </location>
    <ligand>
        <name>substrate</name>
    </ligand>
</feature>
<feature type="binding site" evidence="2">
    <location>
        <begin position="217"/>
        <end position="220"/>
    </location>
    <ligand>
        <name>substrate</name>
    </ligand>
</feature>
<dbReference type="EC" id="2.1.1.33" evidence="2"/>
<dbReference type="EMBL" id="AE014075">
    <property type="protein sequence ID" value="AAN81995.1"/>
    <property type="molecule type" value="Genomic_DNA"/>
</dbReference>
<dbReference type="RefSeq" id="WP_000786915.1">
    <property type="nucleotide sequence ID" value="NZ_CP051263.1"/>
</dbReference>
<dbReference type="SMR" id="Q8FE22"/>
<dbReference type="STRING" id="199310.c3547"/>
<dbReference type="KEGG" id="ecc:c3547"/>
<dbReference type="eggNOG" id="COG0220">
    <property type="taxonomic scope" value="Bacteria"/>
</dbReference>
<dbReference type="HOGENOM" id="CLU_050910_0_1_6"/>
<dbReference type="BioCyc" id="ECOL199310:C3547-MONOMER"/>
<dbReference type="UniPathway" id="UPA00989"/>
<dbReference type="Proteomes" id="UP000001410">
    <property type="component" value="Chromosome"/>
</dbReference>
<dbReference type="GO" id="GO:0043527">
    <property type="term" value="C:tRNA methyltransferase complex"/>
    <property type="evidence" value="ECO:0007669"/>
    <property type="project" value="TreeGrafter"/>
</dbReference>
<dbReference type="GO" id="GO:0008176">
    <property type="term" value="F:tRNA (guanine(46)-N7)-methyltransferase activity"/>
    <property type="evidence" value="ECO:0007669"/>
    <property type="project" value="UniProtKB-UniRule"/>
</dbReference>
<dbReference type="FunFam" id="3.40.50.150:FF:000024">
    <property type="entry name" value="tRNA (guanine-N(7)-)-methyltransferase"/>
    <property type="match status" value="1"/>
</dbReference>
<dbReference type="Gene3D" id="3.40.50.150">
    <property type="entry name" value="Vaccinia Virus protein VP39"/>
    <property type="match status" value="1"/>
</dbReference>
<dbReference type="HAMAP" id="MF_01057">
    <property type="entry name" value="tRNA_methyltr_TrmB"/>
    <property type="match status" value="1"/>
</dbReference>
<dbReference type="InterPro" id="IPR029063">
    <property type="entry name" value="SAM-dependent_MTases_sf"/>
</dbReference>
<dbReference type="InterPro" id="IPR003358">
    <property type="entry name" value="tRNA_(Gua-N-7)_MeTrfase_Trmb"/>
</dbReference>
<dbReference type="InterPro" id="IPR055361">
    <property type="entry name" value="tRNA_methyltr_TrmB_bact"/>
</dbReference>
<dbReference type="NCBIfam" id="TIGR00091">
    <property type="entry name" value="tRNA (guanosine(46)-N7)-methyltransferase TrmB"/>
    <property type="match status" value="1"/>
</dbReference>
<dbReference type="PANTHER" id="PTHR23417">
    <property type="entry name" value="3-DEOXY-D-MANNO-OCTULOSONIC-ACID TRANSFERASE/TRNA GUANINE-N 7 - -METHYLTRANSFERASE"/>
    <property type="match status" value="1"/>
</dbReference>
<dbReference type="PANTHER" id="PTHR23417:SF14">
    <property type="entry name" value="PENTACOTRIPEPTIDE-REPEAT REGION OF PRORP DOMAIN-CONTAINING PROTEIN"/>
    <property type="match status" value="1"/>
</dbReference>
<dbReference type="Pfam" id="PF02390">
    <property type="entry name" value="Methyltransf_4"/>
    <property type="match status" value="1"/>
</dbReference>
<dbReference type="SUPFAM" id="SSF53335">
    <property type="entry name" value="S-adenosyl-L-methionine-dependent methyltransferases"/>
    <property type="match status" value="1"/>
</dbReference>
<dbReference type="PROSITE" id="PS51625">
    <property type="entry name" value="SAM_MT_TRMB"/>
    <property type="match status" value="1"/>
</dbReference>
<accession>Q8FE22</accession>
<protein>
    <recommendedName>
        <fullName evidence="2">tRNA (guanine-N(7)-)-methyltransferase</fullName>
        <ecNumber evidence="2">2.1.1.33</ecNumber>
    </recommendedName>
    <alternativeName>
        <fullName evidence="2">tRNA (guanine(46)-N(7))-methyltransferase</fullName>
    </alternativeName>
    <alternativeName>
        <fullName evidence="2">tRNA(m7G46)-methyltransferase</fullName>
    </alternativeName>
</protein>
<sequence length="239" mass="27337">MKNDVISPEFDENGRPLRRIRSFVRRQGRLTKGQEHALENYWPVMGVEFSEDMLDFPALFGREAPVTLEIGFGMGASLVAMAKDRPEQDFLGIEVHSPGVGACLSSAHEEGLSNLRVMCHDAVEVLHKMIPDNSLRMVQLFFPDPWHKARHNKRRIVQVPFAELVKSKLQLGGIFHMATDWEPYAEHMLEVMSSIDGYKNLSESNDYVPRPASRPVTKFEQRGHRLGHGVWDLMFERVK</sequence>
<name>TRMB_ECOL6</name>
<organism>
    <name type="scientific">Escherichia coli O6:H1 (strain CFT073 / ATCC 700928 / UPEC)</name>
    <dbReference type="NCBI Taxonomy" id="199310"/>
    <lineage>
        <taxon>Bacteria</taxon>
        <taxon>Pseudomonadati</taxon>
        <taxon>Pseudomonadota</taxon>
        <taxon>Gammaproteobacteria</taxon>
        <taxon>Enterobacterales</taxon>
        <taxon>Enterobacteriaceae</taxon>
        <taxon>Escherichia</taxon>
    </lineage>
</organism>